<feature type="chain" id="PRO_0000092342" description="Histidine/lysine/arginine/ornithine transport ATP-binding protein HisP">
    <location>
        <begin position="1"/>
        <end position="258"/>
    </location>
</feature>
<feature type="domain" description="ABC transporter" evidence="1">
    <location>
        <begin position="7"/>
        <end position="253"/>
    </location>
</feature>
<feature type="binding site" evidence="6 12">
    <location>
        <position position="41"/>
    </location>
    <ligand>
        <name>ATP</name>
        <dbReference type="ChEBI" id="CHEBI:30616"/>
    </ligand>
</feature>
<feature type="binding site" evidence="6 12">
    <location>
        <position position="42"/>
    </location>
    <ligand>
        <name>ATP</name>
        <dbReference type="ChEBI" id="CHEBI:30616"/>
    </ligand>
</feature>
<feature type="binding site" evidence="6 12">
    <location>
        <position position="44"/>
    </location>
    <ligand>
        <name>ATP</name>
        <dbReference type="ChEBI" id="CHEBI:30616"/>
    </ligand>
</feature>
<feature type="binding site" evidence="6 12">
    <location>
        <position position="45"/>
    </location>
    <ligand>
        <name>ATP</name>
        <dbReference type="ChEBI" id="CHEBI:30616"/>
    </ligand>
</feature>
<feature type="binding site" evidence="6 12">
    <location>
        <position position="46"/>
    </location>
    <ligand>
        <name>ATP</name>
        <dbReference type="ChEBI" id="CHEBI:30616"/>
    </ligand>
</feature>
<feature type="binding site" evidence="6 12">
    <location>
        <position position="47"/>
    </location>
    <ligand>
        <name>ATP</name>
        <dbReference type="ChEBI" id="CHEBI:30616"/>
    </ligand>
</feature>
<feature type="strand" evidence="13">
    <location>
        <begin position="7"/>
        <end position="16"/>
    </location>
</feature>
<feature type="strand" evidence="13">
    <location>
        <begin position="19"/>
        <end position="29"/>
    </location>
</feature>
<feature type="strand" evidence="13">
    <location>
        <begin position="34"/>
        <end position="38"/>
    </location>
</feature>
<feature type="helix" evidence="13">
    <location>
        <begin position="45"/>
        <end position="52"/>
    </location>
</feature>
<feature type="strand" evidence="13">
    <location>
        <begin position="59"/>
        <end position="65"/>
    </location>
</feature>
<feature type="strand" evidence="13">
    <location>
        <begin position="72"/>
        <end position="74"/>
    </location>
</feature>
<feature type="strand" evidence="13">
    <location>
        <begin position="78"/>
        <end position="83"/>
    </location>
</feature>
<feature type="helix" evidence="13">
    <location>
        <begin position="85"/>
        <end position="94"/>
    </location>
</feature>
<feature type="strand" evidence="13">
    <location>
        <begin position="95"/>
        <end position="98"/>
    </location>
</feature>
<feature type="helix" evidence="13">
    <location>
        <begin position="110"/>
        <end position="120"/>
    </location>
</feature>
<feature type="helix" evidence="13">
    <location>
        <begin position="126"/>
        <end position="139"/>
    </location>
</feature>
<feature type="helix" evidence="13">
    <location>
        <begin position="144"/>
        <end position="147"/>
    </location>
</feature>
<feature type="helix" evidence="13">
    <location>
        <begin position="151"/>
        <end position="153"/>
    </location>
</feature>
<feature type="helix" evidence="13">
    <location>
        <begin position="156"/>
        <end position="169"/>
    </location>
</feature>
<feature type="strand" evidence="13">
    <location>
        <begin position="173"/>
        <end position="179"/>
    </location>
</feature>
<feature type="turn" evidence="13">
    <location>
        <begin position="180"/>
        <end position="183"/>
    </location>
</feature>
<feature type="helix" evidence="13">
    <location>
        <begin position="186"/>
        <end position="188"/>
    </location>
</feature>
<feature type="helix" evidence="13">
    <location>
        <begin position="189"/>
        <end position="201"/>
    </location>
</feature>
<feature type="strand" evidence="13">
    <location>
        <begin position="206"/>
        <end position="209"/>
    </location>
</feature>
<feature type="helix" evidence="13">
    <location>
        <begin position="213"/>
        <end position="219"/>
    </location>
</feature>
<feature type="strand" evidence="13">
    <location>
        <begin position="221"/>
        <end position="227"/>
    </location>
</feature>
<feature type="strand" evidence="13">
    <location>
        <begin position="230"/>
        <end position="235"/>
    </location>
</feature>
<feature type="helix" evidence="13">
    <location>
        <begin position="237"/>
        <end position="242"/>
    </location>
</feature>
<feature type="helix" evidence="13">
    <location>
        <begin position="247"/>
        <end position="258"/>
    </location>
</feature>
<accession>P02915</accession>
<organism>
    <name type="scientific">Salmonella typhimurium (strain LT2 / SGSC1412 / ATCC 700720)</name>
    <dbReference type="NCBI Taxonomy" id="99287"/>
    <lineage>
        <taxon>Bacteria</taxon>
        <taxon>Pseudomonadati</taxon>
        <taxon>Pseudomonadota</taxon>
        <taxon>Gammaproteobacteria</taxon>
        <taxon>Enterobacterales</taxon>
        <taxon>Enterobacteriaceae</taxon>
        <taxon>Salmonella</taxon>
    </lineage>
</organism>
<name>HISP_SALTY</name>
<evidence type="ECO:0000255" key="1">
    <source>
        <dbReference type="PROSITE-ProRule" id="PRU00434"/>
    </source>
</evidence>
<evidence type="ECO:0000269" key="2">
    <source>
    </source>
</evidence>
<evidence type="ECO:0000269" key="3">
    <source>
    </source>
</evidence>
<evidence type="ECO:0000269" key="4">
    <source>
    </source>
</evidence>
<evidence type="ECO:0000269" key="5">
    <source>
    </source>
</evidence>
<evidence type="ECO:0000269" key="6">
    <source>
    </source>
</evidence>
<evidence type="ECO:0000303" key="7">
    <source>
    </source>
</evidence>
<evidence type="ECO:0000305" key="8"/>
<evidence type="ECO:0000305" key="9">
    <source>
    </source>
</evidence>
<evidence type="ECO:0000305" key="10">
    <source>
    </source>
</evidence>
<evidence type="ECO:0000305" key="11">
    <source>
    </source>
</evidence>
<evidence type="ECO:0007744" key="12">
    <source>
        <dbReference type="PDB" id="1B0U"/>
    </source>
</evidence>
<evidence type="ECO:0007829" key="13">
    <source>
        <dbReference type="PDB" id="1B0U"/>
    </source>
</evidence>
<keyword id="KW-0002">3D-structure</keyword>
<keyword id="KW-0029">Amino-acid transport</keyword>
<keyword id="KW-0067">ATP-binding</keyword>
<keyword id="KW-0997">Cell inner membrane</keyword>
<keyword id="KW-1003">Cell membrane</keyword>
<keyword id="KW-0472">Membrane</keyword>
<keyword id="KW-0547">Nucleotide-binding</keyword>
<keyword id="KW-1185">Reference proteome</keyword>
<keyword id="KW-1278">Translocase</keyword>
<keyword id="KW-0813">Transport</keyword>
<dbReference type="EC" id="7.4.2.1" evidence="9 10 11"/>
<dbReference type="EMBL" id="V01373">
    <property type="protein sequence ID" value="CAA24662.1"/>
    <property type="molecule type" value="Genomic_DNA"/>
</dbReference>
<dbReference type="EMBL" id="J01805">
    <property type="protein sequence ID" value="AAA75581.1"/>
    <property type="molecule type" value="Genomic_DNA"/>
</dbReference>
<dbReference type="EMBL" id="AE006468">
    <property type="protein sequence ID" value="AAL21252.1"/>
    <property type="molecule type" value="Genomic_DNA"/>
</dbReference>
<dbReference type="PIR" id="A03412">
    <property type="entry name" value="QREBPT"/>
</dbReference>
<dbReference type="RefSeq" id="NP_461293.1">
    <property type="nucleotide sequence ID" value="NC_003197.2"/>
</dbReference>
<dbReference type="RefSeq" id="WP_000986775.1">
    <property type="nucleotide sequence ID" value="NC_003197.2"/>
</dbReference>
<dbReference type="PDB" id="1B0U">
    <property type="method" value="X-ray"/>
    <property type="resolution" value="1.50 A"/>
    <property type="chains" value="A=1-258"/>
</dbReference>
<dbReference type="PDBsum" id="1B0U"/>
<dbReference type="SMR" id="P02915"/>
<dbReference type="STRING" id="99287.STM2351"/>
<dbReference type="TCDB" id="3.A.1.3.1">
    <property type="family name" value="the atp-binding cassette (abc) superfamily"/>
</dbReference>
<dbReference type="PaxDb" id="99287-STM2351"/>
<dbReference type="GeneID" id="1253873"/>
<dbReference type="KEGG" id="stm:STM2351"/>
<dbReference type="PATRIC" id="fig|99287.12.peg.2488"/>
<dbReference type="HOGENOM" id="CLU_000604_1_22_6"/>
<dbReference type="OMA" id="PREVFCL"/>
<dbReference type="PhylomeDB" id="P02915"/>
<dbReference type="BioCyc" id="SENT99287:STM2351-MONOMER"/>
<dbReference type="EvolutionaryTrace" id="P02915"/>
<dbReference type="Proteomes" id="UP000001014">
    <property type="component" value="Chromosome"/>
</dbReference>
<dbReference type="GO" id="GO:0005886">
    <property type="term" value="C:plasma membrane"/>
    <property type="evidence" value="ECO:0007669"/>
    <property type="project" value="UniProtKB-SubCell"/>
</dbReference>
<dbReference type="GO" id="GO:0015424">
    <property type="term" value="F:ABC-type amino acid transporter activity"/>
    <property type="evidence" value="ECO:0007669"/>
    <property type="project" value="InterPro"/>
</dbReference>
<dbReference type="GO" id="GO:0005524">
    <property type="term" value="F:ATP binding"/>
    <property type="evidence" value="ECO:0007669"/>
    <property type="project" value="UniProtKB-KW"/>
</dbReference>
<dbReference type="GO" id="GO:0016887">
    <property type="term" value="F:ATP hydrolysis activity"/>
    <property type="evidence" value="ECO:0007669"/>
    <property type="project" value="InterPro"/>
</dbReference>
<dbReference type="CDD" id="cd03262">
    <property type="entry name" value="ABC_HisP_GlnQ"/>
    <property type="match status" value="1"/>
</dbReference>
<dbReference type="FunFam" id="3.40.50.300:FF:000020">
    <property type="entry name" value="Amino acid ABC transporter ATP-binding component"/>
    <property type="match status" value="1"/>
</dbReference>
<dbReference type="Gene3D" id="3.40.50.300">
    <property type="entry name" value="P-loop containing nucleotide triphosphate hydrolases"/>
    <property type="match status" value="1"/>
</dbReference>
<dbReference type="InterPro" id="IPR003593">
    <property type="entry name" value="AAA+_ATPase"/>
</dbReference>
<dbReference type="InterPro" id="IPR030679">
    <property type="entry name" value="ABC_ATPase_HisP-typ"/>
</dbReference>
<dbReference type="InterPro" id="IPR003439">
    <property type="entry name" value="ABC_transporter-like_ATP-bd"/>
</dbReference>
<dbReference type="InterPro" id="IPR017871">
    <property type="entry name" value="ABC_transporter-like_CS"/>
</dbReference>
<dbReference type="InterPro" id="IPR050086">
    <property type="entry name" value="MetN_ABC_transporter-like"/>
</dbReference>
<dbReference type="InterPro" id="IPR027417">
    <property type="entry name" value="P-loop_NTPase"/>
</dbReference>
<dbReference type="NCBIfam" id="NF007908">
    <property type="entry name" value="PRK10619.1"/>
    <property type="match status" value="1"/>
</dbReference>
<dbReference type="PANTHER" id="PTHR43166">
    <property type="entry name" value="AMINO ACID IMPORT ATP-BINDING PROTEIN"/>
    <property type="match status" value="1"/>
</dbReference>
<dbReference type="PANTHER" id="PTHR43166:SF15">
    <property type="entry name" value="HISTIDINE TRANSPORT ATP-BINDING PROTEIN HISP"/>
    <property type="match status" value="1"/>
</dbReference>
<dbReference type="Pfam" id="PF00005">
    <property type="entry name" value="ABC_tran"/>
    <property type="match status" value="1"/>
</dbReference>
<dbReference type="PIRSF" id="PIRSF039085">
    <property type="entry name" value="ABC_ATPase_HisP"/>
    <property type="match status" value="1"/>
</dbReference>
<dbReference type="SMART" id="SM00382">
    <property type="entry name" value="AAA"/>
    <property type="match status" value="1"/>
</dbReference>
<dbReference type="SUPFAM" id="SSF52540">
    <property type="entry name" value="P-loop containing nucleoside triphosphate hydrolases"/>
    <property type="match status" value="1"/>
</dbReference>
<dbReference type="PROSITE" id="PS00211">
    <property type="entry name" value="ABC_TRANSPORTER_1"/>
    <property type="match status" value="1"/>
</dbReference>
<dbReference type="PROSITE" id="PS50893">
    <property type="entry name" value="ABC_TRANSPORTER_2"/>
    <property type="match status" value="1"/>
</dbReference>
<protein>
    <recommendedName>
        <fullName evidence="8">Histidine/lysine/arginine/ornithine transport ATP-binding protein HisP</fullName>
        <ecNumber evidence="9 10 11">7.4.2.1</ecNumber>
    </recommendedName>
</protein>
<comment type="function">
    <text evidence="3 4 5">Part of the ABC transporter complex HisPMQJ involved in histidine transport (PubMed:7050725, PubMed:9520394). Is also part of the ABC transporter complex HisPMQ-ArgT involved in lysine/arginine/ornithine transport (PubMed:24021237). Shows ATPase activity (PubMed:9520394). Responsible for energy coupling to the transport system (PubMed:9520394).</text>
</comment>
<comment type="catalytic activity">
    <reaction evidence="9 10 11">
        <text>a polar amino acid(out) + ATP + H2O = a polar amino acid(in) + ADP + phosphate + H(+)</text>
        <dbReference type="Rhea" id="RHEA:14673"/>
        <dbReference type="ChEBI" id="CHEBI:15377"/>
        <dbReference type="ChEBI" id="CHEBI:15378"/>
        <dbReference type="ChEBI" id="CHEBI:30616"/>
        <dbReference type="ChEBI" id="CHEBI:43474"/>
        <dbReference type="ChEBI" id="CHEBI:62031"/>
        <dbReference type="ChEBI" id="CHEBI:456216"/>
        <dbReference type="EC" id="7.4.2.1"/>
    </reaction>
    <physiologicalReaction direction="left-to-right" evidence="9 10 11">
        <dbReference type="Rhea" id="RHEA:14674"/>
    </physiologicalReaction>
</comment>
<comment type="catalytic activity">
    <reaction evidence="10 11">
        <text>L-histidine(out) + ATP + H2O = L-histidine(in) + ADP + phosphate + H(+)</text>
        <dbReference type="Rhea" id="RHEA:29891"/>
        <dbReference type="ChEBI" id="CHEBI:15377"/>
        <dbReference type="ChEBI" id="CHEBI:15378"/>
        <dbReference type="ChEBI" id="CHEBI:30616"/>
        <dbReference type="ChEBI" id="CHEBI:43474"/>
        <dbReference type="ChEBI" id="CHEBI:57595"/>
        <dbReference type="ChEBI" id="CHEBI:456216"/>
    </reaction>
    <physiologicalReaction direction="left-to-right" evidence="10 11">
        <dbReference type="Rhea" id="RHEA:29892"/>
    </physiologicalReaction>
</comment>
<comment type="catalytic activity">
    <reaction evidence="9">
        <text>L-lysine(out) + ATP + H2O = L-lysine(in) + ADP + phosphate + H(+)</text>
        <dbReference type="Rhea" id="RHEA:29887"/>
        <dbReference type="ChEBI" id="CHEBI:15377"/>
        <dbReference type="ChEBI" id="CHEBI:15378"/>
        <dbReference type="ChEBI" id="CHEBI:30616"/>
        <dbReference type="ChEBI" id="CHEBI:32551"/>
        <dbReference type="ChEBI" id="CHEBI:43474"/>
        <dbReference type="ChEBI" id="CHEBI:456216"/>
        <dbReference type="EC" id="7.4.2.1"/>
    </reaction>
    <physiologicalReaction direction="left-to-right" evidence="9">
        <dbReference type="Rhea" id="RHEA:29888"/>
    </physiologicalReaction>
</comment>
<comment type="catalytic activity">
    <reaction evidence="9">
        <text>L-arginine(out) + ATP + H2O = L-arginine(in) + ADP + phosphate + H(+)</text>
        <dbReference type="Rhea" id="RHEA:29879"/>
        <dbReference type="ChEBI" id="CHEBI:15377"/>
        <dbReference type="ChEBI" id="CHEBI:15378"/>
        <dbReference type="ChEBI" id="CHEBI:30616"/>
        <dbReference type="ChEBI" id="CHEBI:32682"/>
        <dbReference type="ChEBI" id="CHEBI:43474"/>
        <dbReference type="ChEBI" id="CHEBI:456216"/>
        <dbReference type="EC" id="7.4.2.1"/>
    </reaction>
    <physiologicalReaction direction="left-to-right" evidence="9">
        <dbReference type="Rhea" id="RHEA:29880"/>
    </physiologicalReaction>
</comment>
<comment type="catalytic activity">
    <reaction evidence="9">
        <text>L-ornithine(out) + ATP + H2O = L-ornithine(in) + ADP + phosphate + H(+)</text>
        <dbReference type="Rhea" id="RHEA:29883"/>
        <dbReference type="ChEBI" id="CHEBI:15377"/>
        <dbReference type="ChEBI" id="CHEBI:15378"/>
        <dbReference type="ChEBI" id="CHEBI:30616"/>
        <dbReference type="ChEBI" id="CHEBI:43474"/>
        <dbReference type="ChEBI" id="CHEBI:46911"/>
        <dbReference type="ChEBI" id="CHEBI:456216"/>
        <dbReference type="EC" id="7.4.2.1"/>
    </reaction>
    <physiologicalReaction direction="left-to-right" evidence="9">
        <dbReference type="Rhea" id="RHEA:29884"/>
    </physiologicalReaction>
</comment>
<comment type="activity regulation">
    <text evidence="5">Isolated, soluble HisP has a very low ATPase activity (PubMed:9520394). ATPase activity is slightly increased in the presence of HisM and HisQ, and strongly increased when HisJ is also present (PubMed:9520394).</text>
</comment>
<comment type="subunit">
    <text evidence="2 3 4 5">The HisPMQJ complex is composed of two ATP-binding proteins (HisP), two transmembrane proteins (HisM and HisQ) and a solute-binding protein (HisJ) (PubMed:2033074, PubMed:7050725, PubMed:9520394). The HisPMQ-ArgT complex is composed of two ATP-binding proteins (HisP), two transmembrane proteins (HisM and HisQ) and a solute-binding protein (ArgT) (PubMed:24021237).</text>
</comment>
<comment type="subcellular location">
    <subcellularLocation>
        <location evidence="2">Cell inner membrane</location>
        <topology evidence="2">Peripheral membrane protein</topology>
    </subcellularLocation>
    <text evidence="2">Binds much more tightly to the membrane in the presence of HisQ and HisM.</text>
</comment>
<comment type="similarity">
    <text evidence="8">Belongs to the ABC transporter superfamily.</text>
</comment>
<reference key="1">
    <citation type="journal article" date="1982" name="Nature">
        <title>Complete nucleotide sequence and identification of membrane components of the histidine transport operon of S. typhimurium.</title>
        <authorList>
            <person name="Higgins C.F."/>
            <person name="Haag P.D."/>
            <person name="Nikaido K."/>
            <person name="Ardeshir F."/>
            <person name="Garcia G."/>
            <person name="Ames G.F.-L."/>
        </authorList>
    </citation>
    <scope>NUCLEOTIDE SEQUENCE [GENOMIC DNA]</scope>
    <scope>FUNCTION</scope>
    <scope>SUBUNIT</scope>
</reference>
<reference key="2">
    <citation type="journal article" date="2001" name="Nature">
        <title>Complete genome sequence of Salmonella enterica serovar Typhimurium LT2.</title>
        <authorList>
            <person name="McClelland M."/>
            <person name="Sanderson K.E."/>
            <person name="Spieth J."/>
            <person name="Clifton S.W."/>
            <person name="Latreille P."/>
            <person name="Courtney L."/>
            <person name="Porwollik S."/>
            <person name="Ali J."/>
            <person name="Dante M."/>
            <person name="Du F."/>
            <person name="Hou S."/>
            <person name="Layman D."/>
            <person name="Leonard S."/>
            <person name="Nguyen C."/>
            <person name="Scott K."/>
            <person name="Holmes A."/>
            <person name="Grewal N."/>
            <person name="Mulvaney E."/>
            <person name="Ryan E."/>
            <person name="Sun H."/>
            <person name="Florea L."/>
            <person name="Miller W."/>
            <person name="Stoneking T."/>
            <person name="Nhan M."/>
            <person name="Waterston R."/>
            <person name="Wilson R.K."/>
        </authorList>
    </citation>
    <scope>NUCLEOTIDE SEQUENCE [LARGE SCALE GENOMIC DNA]</scope>
    <source>
        <strain>LT2 / SGSC1412 / ATCC 700720</strain>
    </source>
</reference>
<reference key="3">
    <citation type="journal article" date="1991" name="J. Biol. Chem.">
        <title>The membrane-bound proteins of periplasmic permeases form a complex. Identification of the histidine permease HisQMP complex.</title>
        <authorList>
            <person name="Kerppola R.E."/>
            <person name="Shyamala V.K."/>
            <person name="Klebba P."/>
            <person name="Ames G.F."/>
        </authorList>
    </citation>
    <scope>SUBUNIT</scope>
    <scope>SUBCELLULAR LOCATION</scope>
</reference>
<reference key="4">
    <citation type="journal article" date="1998" name="Proc. Natl. Acad. Sci. U.S.A.">
        <title>In vitro disassembly and reassembly of an ABC transporter, the histidine permease.</title>
        <authorList>
            <person name="Liu P.Q."/>
            <person name="Ames G.F."/>
        </authorList>
    </citation>
    <scope>FUNCTION</scope>
    <scope>ATPASE ACTIVITY</scope>
    <scope>ACTIVITY REGULATION</scope>
    <scope>SUBUNIT</scope>
</reference>
<reference key="5">
    <citation type="journal article" date="2014" name="Biochim. Biophys. Acta">
        <title>Conformational changes of the bacterial type I ATP-binding cassette importer HisQMP2 at distinct steps of the catalytic cycle.</title>
        <authorList>
            <person name="Heuveling J."/>
            <person name="Frochaux V."/>
            <person name="Ziomkowska J."/>
            <person name="Wawrzinek R."/>
            <person name="Wessig P."/>
            <person name="Herrmann A."/>
            <person name="Schneider E."/>
        </authorList>
    </citation>
    <scope>FUNCTION</scope>
    <scope>SUBUNIT</scope>
</reference>
<reference evidence="12" key="6">
    <citation type="journal article" date="1998" name="Nature">
        <title>Crystal structure of the ATP-binding subunit of an ABC transporter.</title>
        <authorList>
            <person name="Hung L.W."/>
            <person name="Wang I.X."/>
            <person name="Nikaido K."/>
            <person name="Liu P.Q."/>
            <person name="Ames G.F.-L."/>
            <person name="Kim S.H."/>
        </authorList>
    </citation>
    <scope>X-RAY CRYSTALLOGRAPHY (1.5 ANGSTROMS) IN COMPLEX WITH ATP</scope>
</reference>
<gene>
    <name evidence="7" type="primary">hisP</name>
    <name type="ordered locus">STM2351</name>
</gene>
<proteinExistence type="evidence at protein level"/>
<sequence length="258" mass="28771">MMSENKLHVIDLHKRYGGHEVLKGVSLQARAGDVISIIGSSGSGKSTFLRCINFLEKPSEGAIIVNGQNINLVRDKDGQLKVADKNQLRLLRTRLTMVFQHFNLWSHMTVLENVMEAPIQVLGLSKHDARERALKYLAKVGIDERAQGKYPVHLSGGQQQRVSIARALAMEPDVLLFDEPTSALDPELVGEVLRIMQQLAEEGKTMVVVTHEMGFARHVSSHVIFLHQGKIEEEGDPEQVFGNPQSPRLQQFLKGSLK</sequence>